<organism>
    <name type="scientific">Pseudoalteromonas atlantica (strain T6c / ATCC BAA-1087)</name>
    <dbReference type="NCBI Taxonomy" id="3042615"/>
    <lineage>
        <taxon>Bacteria</taxon>
        <taxon>Pseudomonadati</taxon>
        <taxon>Pseudomonadota</taxon>
        <taxon>Gammaproteobacteria</taxon>
        <taxon>Alteromonadales</taxon>
        <taxon>Alteromonadaceae</taxon>
        <taxon>Paraglaciecola</taxon>
    </lineage>
</organism>
<keyword id="KW-0687">Ribonucleoprotein</keyword>
<keyword id="KW-0689">Ribosomal protein</keyword>
<keyword id="KW-0694">RNA-binding</keyword>
<keyword id="KW-0699">rRNA-binding</keyword>
<keyword id="KW-0820">tRNA-binding</keyword>
<protein>
    <recommendedName>
        <fullName evidence="1">Small ribosomal subunit protein uS13</fullName>
    </recommendedName>
    <alternativeName>
        <fullName evidence="3">30S ribosomal protein S13</fullName>
    </alternativeName>
</protein>
<name>RS13_PSEA6</name>
<sequence>MARIAGINIPEHKHTVIALTAIFGVGSTRAQSICEAAGVAETTKIKDLDEAQIDKLRDEVAKFTVEGDLRREVSMSIKRLMDLGCFRGIRHRRSLPLRGQRTKTNARTRKGPRKAIKK</sequence>
<proteinExistence type="inferred from homology"/>
<reference key="1">
    <citation type="submission" date="2006-06" db="EMBL/GenBank/DDBJ databases">
        <title>Complete sequence of Pseudoalteromonas atlantica T6c.</title>
        <authorList>
            <consortium name="US DOE Joint Genome Institute"/>
            <person name="Copeland A."/>
            <person name="Lucas S."/>
            <person name="Lapidus A."/>
            <person name="Barry K."/>
            <person name="Detter J.C."/>
            <person name="Glavina del Rio T."/>
            <person name="Hammon N."/>
            <person name="Israni S."/>
            <person name="Dalin E."/>
            <person name="Tice H."/>
            <person name="Pitluck S."/>
            <person name="Saunders E."/>
            <person name="Brettin T."/>
            <person name="Bruce D."/>
            <person name="Han C."/>
            <person name="Tapia R."/>
            <person name="Gilna P."/>
            <person name="Schmutz J."/>
            <person name="Larimer F."/>
            <person name="Land M."/>
            <person name="Hauser L."/>
            <person name="Kyrpides N."/>
            <person name="Kim E."/>
            <person name="Karls A.C."/>
            <person name="Bartlett D."/>
            <person name="Higgins B.P."/>
            <person name="Richardson P."/>
        </authorList>
    </citation>
    <scope>NUCLEOTIDE SEQUENCE [LARGE SCALE GENOMIC DNA]</scope>
    <source>
        <strain>T6c / ATCC BAA-1087</strain>
    </source>
</reference>
<dbReference type="EMBL" id="CP000388">
    <property type="protein sequence ID" value="ABG39537.1"/>
    <property type="molecule type" value="Genomic_DNA"/>
</dbReference>
<dbReference type="RefSeq" id="WP_006990561.1">
    <property type="nucleotide sequence ID" value="NC_008228.1"/>
</dbReference>
<dbReference type="SMR" id="Q15X51"/>
<dbReference type="STRING" id="342610.Patl_1011"/>
<dbReference type="KEGG" id="pat:Patl_1011"/>
<dbReference type="eggNOG" id="COG0099">
    <property type="taxonomic scope" value="Bacteria"/>
</dbReference>
<dbReference type="HOGENOM" id="CLU_103849_1_2_6"/>
<dbReference type="OrthoDB" id="9803610at2"/>
<dbReference type="Proteomes" id="UP000001981">
    <property type="component" value="Chromosome"/>
</dbReference>
<dbReference type="GO" id="GO:0005829">
    <property type="term" value="C:cytosol"/>
    <property type="evidence" value="ECO:0007669"/>
    <property type="project" value="TreeGrafter"/>
</dbReference>
<dbReference type="GO" id="GO:0015935">
    <property type="term" value="C:small ribosomal subunit"/>
    <property type="evidence" value="ECO:0007669"/>
    <property type="project" value="TreeGrafter"/>
</dbReference>
<dbReference type="GO" id="GO:0019843">
    <property type="term" value="F:rRNA binding"/>
    <property type="evidence" value="ECO:0007669"/>
    <property type="project" value="UniProtKB-UniRule"/>
</dbReference>
<dbReference type="GO" id="GO:0003735">
    <property type="term" value="F:structural constituent of ribosome"/>
    <property type="evidence" value="ECO:0007669"/>
    <property type="project" value="InterPro"/>
</dbReference>
<dbReference type="GO" id="GO:0000049">
    <property type="term" value="F:tRNA binding"/>
    <property type="evidence" value="ECO:0007669"/>
    <property type="project" value="UniProtKB-UniRule"/>
</dbReference>
<dbReference type="GO" id="GO:0006412">
    <property type="term" value="P:translation"/>
    <property type="evidence" value="ECO:0007669"/>
    <property type="project" value="UniProtKB-UniRule"/>
</dbReference>
<dbReference type="FunFam" id="1.10.8.50:FF:000001">
    <property type="entry name" value="30S ribosomal protein S13"/>
    <property type="match status" value="1"/>
</dbReference>
<dbReference type="FunFam" id="4.10.910.10:FF:000001">
    <property type="entry name" value="30S ribosomal protein S13"/>
    <property type="match status" value="1"/>
</dbReference>
<dbReference type="Gene3D" id="1.10.8.50">
    <property type="match status" value="1"/>
</dbReference>
<dbReference type="Gene3D" id="4.10.910.10">
    <property type="entry name" value="30s ribosomal protein s13, domain 2"/>
    <property type="match status" value="1"/>
</dbReference>
<dbReference type="HAMAP" id="MF_01315">
    <property type="entry name" value="Ribosomal_uS13"/>
    <property type="match status" value="1"/>
</dbReference>
<dbReference type="InterPro" id="IPR027437">
    <property type="entry name" value="Rbsml_uS13_C"/>
</dbReference>
<dbReference type="InterPro" id="IPR001892">
    <property type="entry name" value="Ribosomal_uS13"/>
</dbReference>
<dbReference type="InterPro" id="IPR010979">
    <property type="entry name" value="Ribosomal_uS13-like_H2TH"/>
</dbReference>
<dbReference type="InterPro" id="IPR019980">
    <property type="entry name" value="Ribosomal_uS13_bac-type"/>
</dbReference>
<dbReference type="InterPro" id="IPR018269">
    <property type="entry name" value="Ribosomal_uS13_CS"/>
</dbReference>
<dbReference type="NCBIfam" id="TIGR03631">
    <property type="entry name" value="uS13_bact"/>
    <property type="match status" value="1"/>
</dbReference>
<dbReference type="PANTHER" id="PTHR10871">
    <property type="entry name" value="30S RIBOSOMAL PROTEIN S13/40S RIBOSOMAL PROTEIN S18"/>
    <property type="match status" value="1"/>
</dbReference>
<dbReference type="PANTHER" id="PTHR10871:SF1">
    <property type="entry name" value="SMALL RIBOSOMAL SUBUNIT PROTEIN US13M"/>
    <property type="match status" value="1"/>
</dbReference>
<dbReference type="Pfam" id="PF00416">
    <property type="entry name" value="Ribosomal_S13"/>
    <property type="match status" value="1"/>
</dbReference>
<dbReference type="PIRSF" id="PIRSF002134">
    <property type="entry name" value="Ribosomal_S13"/>
    <property type="match status" value="1"/>
</dbReference>
<dbReference type="SUPFAM" id="SSF46946">
    <property type="entry name" value="S13-like H2TH domain"/>
    <property type="match status" value="1"/>
</dbReference>
<dbReference type="PROSITE" id="PS00646">
    <property type="entry name" value="RIBOSOMAL_S13_1"/>
    <property type="match status" value="1"/>
</dbReference>
<dbReference type="PROSITE" id="PS50159">
    <property type="entry name" value="RIBOSOMAL_S13_2"/>
    <property type="match status" value="1"/>
</dbReference>
<accession>Q15X51</accession>
<evidence type="ECO:0000255" key="1">
    <source>
        <dbReference type="HAMAP-Rule" id="MF_01315"/>
    </source>
</evidence>
<evidence type="ECO:0000256" key="2">
    <source>
        <dbReference type="SAM" id="MobiDB-lite"/>
    </source>
</evidence>
<evidence type="ECO:0000305" key="3"/>
<feature type="chain" id="PRO_0000306679" description="Small ribosomal subunit protein uS13">
    <location>
        <begin position="1"/>
        <end position="118"/>
    </location>
</feature>
<feature type="region of interest" description="Disordered" evidence="2">
    <location>
        <begin position="94"/>
        <end position="118"/>
    </location>
</feature>
<gene>
    <name evidence="1" type="primary">rpsM</name>
    <name type="ordered locus">Patl_1011</name>
</gene>
<comment type="function">
    <text evidence="1">Located at the top of the head of the 30S subunit, it contacts several helices of the 16S rRNA. In the 70S ribosome it contacts the 23S rRNA (bridge B1a) and protein L5 of the 50S subunit (bridge B1b), connecting the 2 subunits; these bridges are implicated in subunit movement. Contacts the tRNAs in the A and P-sites.</text>
</comment>
<comment type="subunit">
    <text evidence="1">Part of the 30S ribosomal subunit. Forms a loose heterodimer with protein S19. Forms two bridges to the 50S subunit in the 70S ribosome.</text>
</comment>
<comment type="similarity">
    <text evidence="1">Belongs to the universal ribosomal protein uS13 family.</text>
</comment>